<comment type="function">
    <text evidence="1">Necessary for the introduction of cis unsaturation into fatty acids. Catalyzes the dehydration of (3R)-3-hydroxydecanoyl-ACP to E-(2)-decenoyl-ACP and then its isomerization to Z-(3)-decenoyl-ACP. Can catalyze the dehydratase reaction for beta-hydroxyacyl-ACPs with saturated chain lengths up to 16:0, being most active on intermediate chain length.</text>
</comment>
<comment type="catalytic activity">
    <reaction evidence="1">
        <text>a (3R)-hydroxyacyl-[ACP] = a (2E)-enoyl-[ACP] + H2O</text>
        <dbReference type="Rhea" id="RHEA:13097"/>
        <dbReference type="Rhea" id="RHEA-COMP:9925"/>
        <dbReference type="Rhea" id="RHEA-COMP:9945"/>
        <dbReference type="ChEBI" id="CHEBI:15377"/>
        <dbReference type="ChEBI" id="CHEBI:78784"/>
        <dbReference type="ChEBI" id="CHEBI:78827"/>
        <dbReference type="EC" id="4.2.1.59"/>
    </reaction>
</comment>
<comment type="catalytic activity">
    <reaction evidence="1">
        <text>(3R)-hydroxydecanoyl-[ACP] = (2E)-decenoyl-[ACP] + H2O</text>
        <dbReference type="Rhea" id="RHEA:41860"/>
        <dbReference type="Rhea" id="RHEA-COMP:9638"/>
        <dbReference type="Rhea" id="RHEA-COMP:9639"/>
        <dbReference type="ChEBI" id="CHEBI:15377"/>
        <dbReference type="ChEBI" id="CHEBI:78466"/>
        <dbReference type="ChEBI" id="CHEBI:78467"/>
    </reaction>
</comment>
<comment type="catalytic activity">
    <reaction evidence="1">
        <text>(2E)-decenoyl-[ACP] = (3Z)-decenoyl-[ACP]</text>
        <dbReference type="Rhea" id="RHEA:23568"/>
        <dbReference type="Rhea" id="RHEA-COMP:9639"/>
        <dbReference type="Rhea" id="RHEA-COMP:9927"/>
        <dbReference type="ChEBI" id="CHEBI:78467"/>
        <dbReference type="ChEBI" id="CHEBI:78798"/>
        <dbReference type="EC" id="5.3.3.14"/>
    </reaction>
</comment>
<comment type="pathway">
    <text evidence="1">Lipid metabolism; fatty acid biosynthesis.</text>
</comment>
<comment type="subunit">
    <text evidence="1">Homodimer.</text>
</comment>
<comment type="subcellular location">
    <subcellularLocation>
        <location evidence="1">Cytoplasm</location>
    </subcellularLocation>
</comment>
<comment type="similarity">
    <text evidence="1">Belongs to the thioester dehydratase family. FabA subfamily.</text>
</comment>
<sequence length="172" mass="19033">MQNKRESYTREDLLASSQGELFGPGYPQLPAPNMLMMDRVTKMSETEGDFGKGLILAELDIKPDLWFFDCHFPGDPVMPGCLGLDAMWQLVGFFLGWVGGKGKGRALGVGEVKFTGQILPTAKKVTYEIHMKRVVNRKLVMGLADGRVLVDGKEIYVAKDLKVGLFQDTSAF</sequence>
<evidence type="ECO:0000255" key="1">
    <source>
        <dbReference type="HAMAP-Rule" id="MF_00405"/>
    </source>
</evidence>
<organism>
    <name type="scientific">Vibrio vulnificus (strain YJ016)</name>
    <dbReference type="NCBI Taxonomy" id="196600"/>
    <lineage>
        <taxon>Bacteria</taxon>
        <taxon>Pseudomonadati</taxon>
        <taxon>Pseudomonadota</taxon>
        <taxon>Gammaproteobacteria</taxon>
        <taxon>Vibrionales</taxon>
        <taxon>Vibrionaceae</taxon>
        <taxon>Vibrio</taxon>
    </lineage>
</organism>
<protein>
    <recommendedName>
        <fullName evidence="1">3-hydroxydecanoyl-[acyl-carrier-protein] dehydratase</fullName>
        <ecNumber evidence="1">4.2.1.59</ecNumber>
    </recommendedName>
    <alternativeName>
        <fullName evidence="1">3-hydroxyacyl-[acyl-carrier-protein] dehydratase FabA</fullName>
    </alternativeName>
    <alternativeName>
        <fullName evidence="1">Beta-hydroxydecanoyl thioester dehydrase</fullName>
    </alternativeName>
    <alternativeName>
        <fullName evidence="1">Trans-2-decenoyl-[acyl-carrier-protein] isomerase</fullName>
        <ecNumber evidence="1">5.3.3.14</ecNumber>
    </alternativeName>
</protein>
<proteinExistence type="inferred from homology"/>
<dbReference type="EC" id="4.2.1.59" evidence="1"/>
<dbReference type="EC" id="5.3.3.14" evidence="1"/>
<dbReference type="EMBL" id="BA000037">
    <property type="protein sequence ID" value="BAC94426.1"/>
    <property type="molecule type" value="Genomic_DNA"/>
</dbReference>
<dbReference type="RefSeq" id="WP_011080474.1">
    <property type="nucleotide sequence ID" value="NC_005139.1"/>
</dbReference>
<dbReference type="SMR" id="Q7M7J5"/>
<dbReference type="STRING" id="672.VV93_v1c15340"/>
<dbReference type="GeneID" id="93896873"/>
<dbReference type="KEGG" id="vvy:VV1662"/>
<dbReference type="eggNOG" id="COG0764">
    <property type="taxonomic scope" value="Bacteria"/>
</dbReference>
<dbReference type="HOGENOM" id="CLU_097925_0_0_6"/>
<dbReference type="UniPathway" id="UPA00094"/>
<dbReference type="Proteomes" id="UP000002675">
    <property type="component" value="Chromosome I"/>
</dbReference>
<dbReference type="GO" id="GO:0005737">
    <property type="term" value="C:cytoplasm"/>
    <property type="evidence" value="ECO:0007669"/>
    <property type="project" value="UniProtKB-SubCell"/>
</dbReference>
<dbReference type="GO" id="GO:0019171">
    <property type="term" value="F:(3R)-hydroxyacyl-[acyl-carrier-protein] dehydratase activity"/>
    <property type="evidence" value="ECO:0007669"/>
    <property type="project" value="UniProtKB-UniRule"/>
</dbReference>
<dbReference type="GO" id="GO:0034017">
    <property type="term" value="F:trans-2-decenoyl-acyl-carrier-protein isomerase activity"/>
    <property type="evidence" value="ECO:0007669"/>
    <property type="project" value="UniProtKB-UniRule"/>
</dbReference>
<dbReference type="GO" id="GO:0006636">
    <property type="term" value="P:unsaturated fatty acid biosynthetic process"/>
    <property type="evidence" value="ECO:0007669"/>
    <property type="project" value="UniProtKB-UniRule"/>
</dbReference>
<dbReference type="CDD" id="cd01287">
    <property type="entry name" value="FabA"/>
    <property type="match status" value="1"/>
</dbReference>
<dbReference type="FunFam" id="3.10.129.10:FF:000003">
    <property type="entry name" value="3-hydroxydecanoyl-[acyl-carrier-protein] dehydratase"/>
    <property type="match status" value="1"/>
</dbReference>
<dbReference type="Gene3D" id="3.10.129.10">
    <property type="entry name" value="Hotdog Thioesterase"/>
    <property type="match status" value="1"/>
</dbReference>
<dbReference type="HAMAP" id="MF_00405">
    <property type="entry name" value="FabA"/>
    <property type="match status" value="1"/>
</dbReference>
<dbReference type="InterPro" id="IPR010083">
    <property type="entry name" value="FabA"/>
</dbReference>
<dbReference type="InterPro" id="IPR013114">
    <property type="entry name" value="FabA_FabZ"/>
</dbReference>
<dbReference type="InterPro" id="IPR029069">
    <property type="entry name" value="HotDog_dom_sf"/>
</dbReference>
<dbReference type="NCBIfam" id="TIGR01749">
    <property type="entry name" value="fabA"/>
    <property type="match status" value="1"/>
</dbReference>
<dbReference type="NCBIfam" id="NF003509">
    <property type="entry name" value="PRK05174.1"/>
    <property type="match status" value="1"/>
</dbReference>
<dbReference type="PANTHER" id="PTHR30272">
    <property type="entry name" value="3-HYDROXYACYL-[ACYL-CARRIER-PROTEIN] DEHYDRATASE"/>
    <property type="match status" value="1"/>
</dbReference>
<dbReference type="PANTHER" id="PTHR30272:SF8">
    <property type="entry name" value="3-HYDROXYDECANOYL-[ACYL-CARRIER-PROTEIN] DEHYDRATASE"/>
    <property type="match status" value="1"/>
</dbReference>
<dbReference type="Pfam" id="PF07977">
    <property type="entry name" value="FabA"/>
    <property type="match status" value="1"/>
</dbReference>
<dbReference type="SUPFAM" id="SSF54637">
    <property type="entry name" value="Thioesterase/thiol ester dehydrase-isomerase"/>
    <property type="match status" value="1"/>
</dbReference>
<feature type="chain" id="PRO_0000091620" description="3-hydroxydecanoyl-[acyl-carrier-protein] dehydratase">
    <location>
        <begin position="1"/>
        <end position="172"/>
    </location>
</feature>
<feature type="active site" evidence="1">
    <location>
        <position position="71"/>
    </location>
</feature>
<reference key="1">
    <citation type="journal article" date="2003" name="Genome Res.">
        <title>Comparative genome analysis of Vibrio vulnificus, a marine pathogen.</title>
        <authorList>
            <person name="Chen C.-Y."/>
            <person name="Wu K.-M."/>
            <person name="Chang Y.-C."/>
            <person name="Chang C.-H."/>
            <person name="Tsai H.-C."/>
            <person name="Liao T.-L."/>
            <person name="Liu Y.-M."/>
            <person name="Chen H.-J."/>
            <person name="Shen A.B.-T."/>
            <person name="Li J.-C."/>
            <person name="Su T.-L."/>
            <person name="Shao C.-P."/>
            <person name="Lee C.-T."/>
            <person name="Hor L.-I."/>
            <person name="Tsai S.-F."/>
        </authorList>
    </citation>
    <scope>NUCLEOTIDE SEQUENCE [LARGE SCALE GENOMIC DNA]</scope>
    <source>
        <strain>YJ016</strain>
    </source>
</reference>
<name>FABA_VIBVY</name>
<keyword id="KW-0963">Cytoplasm</keyword>
<keyword id="KW-0275">Fatty acid biosynthesis</keyword>
<keyword id="KW-0276">Fatty acid metabolism</keyword>
<keyword id="KW-0413">Isomerase</keyword>
<keyword id="KW-0444">Lipid biosynthesis</keyword>
<keyword id="KW-0443">Lipid metabolism</keyword>
<keyword id="KW-0456">Lyase</keyword>
<accession>Q7M7J5</accession>
<gene>
    <name evidence="1" type="primary">fabA</name>
    <name type="ordered locus">VV1662</name>
</gene>